<dbReference type="EC" id="6.1.1.23" evidence="1"/>
<dbReference type="EMBL" id="CP000285">
    <property type="protein sequence ID" value="ABE59196.1"/>
    <property type="molecule type" value="Genomic_DNA"/>
</dbReference>
<dbReference type="RefSeq" id="WP_011507142.1">
    <property type="nucleotide sequence ID" value="NC_007963.1"/>
</dbReference>
<dbReference type="SMR" id="Q1QWG2"/>
<dbReference type="STRING" id="290398.Csal_1844"/>
<dbReference type="GeneID" id="95334561"/>
<dbReference type="KEGG" id="csa:Csal_1844"/>
<dbReference type="eggNOG" id="COG0173">
    <property type="taxonomic scope" value="Bacteria"/>
</dbReference>
<dbReference type="HOGENOM" id="CLU_014330_3_2_6"/>
<dbReference type="OrthoDB" id="9802326at2"/>
<dbReference type="Proteomes" id="UP000000239">
    <property type="component" value="Chromosome"/>
</dbReference>
<dbReference type="GO" id="GO:0005737">
    <property type="term" value="C:cytoplasm"/>
    <property type="evidence" value="ECO:0007669"/>
    <property type="project" value="UniProtKB-SubCell"/>
</dbReference>
<dbReference type="GO" id="GO:0004815">
    <property type="term" value="F:aspartate-tRNA ligase activity"/>
    <property type="evidence" value="ECO:0007669"/>
    <property type="project" value="UniProtKB-UniRule"/>
</dbReference>
<dbReference type="GO" id="GO:0050560">
    <property type="term" value="F:aspartate-tRNA(Asn) ligase activity"/>
    <property type="evidence" value="ECO:0007669"/>
    <property type="project" value="UniProtKB-EC"/>
</dbReference>
<dbReference type="GO" id="GO:0005524">
    <property type="term" value="F:ATP binding"/>
    <property type="evidence" value="ECO:0007669"/>
    <property type="project" value="UniProtKB-UniRule"/>
</dbReference>
<dbReference type="GO" id="GO:0003676">
    <property type="term" value="F:nucleic acid binding"/>
    <property type="evidence" value="ECO:0007669"/>
    <property type="project" value="InterPro"/>
</dbReference>
<dbReference type="GO" id="GO:0006422">
    <property type="term" value="P:aspartyl-tRNA aminoacylation"/>
    <property type="evidence" value="ECO:0007669"/>
    <property type="project" value="UniProtKB-UniRule"/>
</dbReference>
<dbReference type="CDD" id="cd00777">
    <property type="entry name" value="AspRS_core"/>
    <property type="match status" value="1"/>
</dbReference>
<dbReference type="CDD" id="cd04317">
    <property type="entry name" value="EcAspRS_like_N"/>
    <property type="match status" value="1"/>
</dbReference>
<dbReference type="Gene3D" id="3.30.930.10">
    <property type="entry name" value="Bira Bifunctional Protein, Domain 2"/>
    <property type="match status" value="1"/>
</dbReference>
<dbReference type="Gene3D" id="3.30.1360.30">
    <property type="entry name" value="GAD-like domain"/>
    <property type="match status" value="1"/>
</dbReference>
<dbReference type="Gene3D" id="2.40.50.140">
    <property type="entry name" value="Nucleic acid-binding proteins"/>
    <property type="match status" value="1"/>
</dbReference>
<dbReference type="HAMAP" id="MF_00044">
    <property type="entry name" value="Asp_tRNA_synth_type1"/>
    <property type="match status" value="1"/>
</dbReference>
<dbReference type="InterPro" id="IPR004364">
    <property type="entry name" value="Aa-tRNA-synt_II"/>
</dbReference>
<dbReference type="InterPro" id="IPR006195">
    <property type="entry name" value="aa-tRNA-synth_II"/>
</dbReference>
<dbReference type="InterPro" id="IPR045864">
    <property type="entry name" value="aa-tRNA-synth_II/BPL/LPL"/>
</dbReference>
<dbReference type="InterPro" id="IPR004524">
    <property type="entry name" value="Asp-tRNA-ligase_1"/>
</dbReference>
<dbReference type="InterPro" id="IPR047089">
    <property type="entry name" value="Asp-tRNA-ligase_1_N"/>
</dbReference>
<dbReference type="InterPro" id="IPR002312">
    <property type="entry name" value="Asp/Asn-tRNA-synth_IIb"/>
</dbReference>
<dbReference type="InterPro" id="IPR047090">
    <property type="entry name" value="AspRS_core"/>
</dbReference>
<dbReference type="InterPro" id="IPR004115">
    <property type="entry name" value="GAD-like_sf"/>
</dbReference>
<dbReference type="InterPro" id="IPR029351">
    <property type="entry name" value="GAD_dom"/>
</dbReference>
<dbReference type="InterPro" id="IPR012340">
    <property type="entry name" value="NA-bd_OB-fold"/>
</dbReference>
<dbReference type="InterPro" id="IPR004365">
    <property type="entry name" value="NA-bd_OB_tRNA"/>
</dbReference>
<dbReference type="NCBIfam" id="TIGR00459">
    <property type="entry name" value="aspS_bact"/>
    <property type="match status" value="1"/>
</dbReference>
<dbReference type="NCBIfam" id="NF001750">
    <property type="entry name" value="PRK00476.1"/>
    <property type="match status" value="1"/>
</dbReference>
<dbReference type="PANTHER" id="PTHR22594:SF5">
    <property type="entry name" value="ASPARTATE--TRNA LIGASE, MITOCHONDRIAL"/>
    <property type="match status" value="1"/>
</dbReference>
<dbReference type="PANTHER" id="PTHR22594">
    <property type="entry name" value="ASPARTYL/LYSYL-TRNA SYNTHETASE"/>
    <property type="match status" value="1"/>
</dbReference>
<dbReference type="Pfam" id="PF02938">
    <property type="entry name" value="GAD"/>
    <property type="match status" value="1"/>
</dbReference>
<dbReference type="Pfam" id="PF00152">
    <property type="entry name" value="tRNA-synt_2"/>
    <property type="match status" value="1"/>
</dbReference>
<dbReference type="Pfam" id="PF01336">
    <property type="entry name" value="tRNA_anti-codon"/>
    <property type="match status" value="1"/>
</dbReference>
<dbReference type="PRINTS" id="PR01042">
    <property type="entry name" value="TRNASYNTHASP"/>
</dbReference>
<dbReference type="SUPFAM" id="SSF55681">
    <property type="entry name" value="Class II aaRS and biotin synthetases"/>
    <property type="match status" value="1"/>
</dbReference>
<dbReference type="SUPFAM" id="SSF55261">
    <property type="entry name" value="GAD domain-like"/>
    <property type="match status" value="1"/>
</dbReference>
<dbReference type="SUPFAM" id="SSF50249">
    <property type="entry name" value="Nucleic acid-binding proteins"/>
    <property type="match status" value="1"/>
</dbReference>
<dbReference type="PROSITE" id="PS50862">
    <property type="entry name" value="AA_TRNA_LIGASE_II"/>
    <property type="match status" value="1"/>
</dbReference>
<reference key="1">
    <citation type="journal article" date="2011" name="Stand. Genomic Sci.">
        <title>Complete genome sequence of the halophilic and highly halotolerant Chromohalobacter salexigens type strain (1H11(T)).</title>
        <authorList>
            <person name="Copeland A."/>
            <person name="O'Connor K."/>
            <person name="Lucas S."/>
            <person name="Lapidus A."/>
            <person name="Berry K.W."/>
            <person name="Detter J.C."/>
            <person name="Del Rio T.G."/>
            <person name="Hammon N."/>
            <person name="Dalin E."/>
            <person name="Tice H."/>
            <person name="Pitluck S."/>
            <person name="Bruce D."/>
            <person name="Goodwin L."/>
            <person name="Han C."/>
            <person name="Tapia R."/>
            <person name="Saunders E."/>
            <person name="Schmutz J."/>
            <person name="Brettin T."/>
            <person name="Larimer F."/>
            <person name="Land M."/>
            <person name="Hauser L."/>
            <person name="Vargas C."/>
            <person name="Nieto J.J."/>
            <person name="Kyrpides N.C."/>
            <person name="Ivanova N."/>
            <person name="Goker M."/>
            <person name="Klenk H.P."/>
            <person name="Csonka L.N."/>
            <person name="Woyke T."/>
        </authorList>
    </citation>
    <scope>NUCLEOTIDE SEQUENCE [LARGE SCALE GENOMIC DNA]</scope>
    <source>
        <strain>ATCC BAA-138 / DSM 3043 / CIP 106854 / NCIMB 13768 / 1H11</strain>
    </source>
</reference>
<keyword id="KW-0030">Aminoacyl-tRNA synthetase</keyword>
<keyword id="KW-0067">ATP-binding</keyword>
<keyword id="KW-0963">Cytoplasm</keyword>
<keyword id="KW-0436">Ligase</keyword>
<keyword id="KW-0547">Nucleotide-binding</keyword>
<keyword id="KW-0648">Protein biosynthesis</keyword>
<keyword id="KW-1185">Reference proteome</keyword>
<protein>
    <recommendedName>
        <fullName evidence="1">Aspartate--tRNA(Asp/Asn) ligase</fullName>
        <ecNumber evidence="1">6.1.1.23</ecNumber>
    </recommendedName>
    <alternativeName>
        <fullName evidence="1">Aspartyl-tRNA synthetase</fullName>
        <shortName evidence="1">AspRS</shortName>
    </alternativeName>
    <alternativeName>
        <fullName evidence="1">Non-discriminating aspartyl-tRNA synthetase</fullName>
        <shortName evidence="1">ND-AspRS</shortName>
    </alternativeName>
</protein>
<sequence>MRSHYCGQLNETLVDEEVALCGWVHRRRDHGGVIFLDLRDRDGIAQVVVDPDTPEAFANADRARNEFVLRIRGRIRLRPEGTQNAHMPTGMIEVLAKDVEVLNTAATPPFQLDEHGKVGEEIRLKHRYIDLRRPEMIDKLRLRSRITHSVRAYLEGQGFLDIETPILTRATPEGARDYLVPSRTHAGEFFALPQSPQLFKQLLMVSGFDRYYQIAKCFRDEDLRADRQPEFTQIDLEASFVEESDIMSLTEDMIRRLFQDVLDVELPAFPKMPYSEAMNRYGSDKPDLRIPLELVDVDDLMQGVDFKVFSGPAKADDGRVAALKVTGGATLSRKEIDAYTDFVNIYGAKGLAWIKVNERAKGIQGLQSPIVKFMEDIIESLLDRVGAEDGDIIFFGADKARIVNEALGALRVKLGEDLDLYTQAWAPLWVVDFPMFEADDNGRLAALHHPFTAPSCTPEAFKADPANALSRAYDMVLNGTELGGGSIRIHDQTMQRAVFEVLGIGEEEADEKFGFLLDALKFGAPPHGGLAFGLDRLVMLMSGARTIREVIAFPKTQSAACLMTDAPGEVSAEQLKELNIRLRQKAQNNGDV</sequence>
<organism>
    <name type="scientific">Chromohalobacter salexigens (strain ATCC BAA-138 / DSM 3043 / CIP 106854 / NCIMB 13768 / 1H11)</name>
    <dbReference type="NCBI Taxonomy" id="290398"/>
    <lineage>
        <taxon>Bacteria</taxon>
        <taxon>Pseudomonadati</taxon>
        <taxon>Pseudomonadota</taxon>
        <taxon>Gammaproteobacteria</taxon>
        <taxon>Oceanospirillales</taxon>
        <taxon>Halomonadaceae</taxon>
        <taxon>Chromohalobacter</taxon>
    </lineage>
</organism>
<comment type="function">
    <text evidence="1">Aspartyl-tRNA synthetase with relaxed tRNA specificity since it is able to aspartylate not only its cognate tRNA(Asp) but also tRNA(Asn). Reaction proceeds in two steps: L-aspartate is first activated by ATP to form Asp-AMP and then transferred to the acceptor end of tRNA(Asp/Asn).</text>
</comment>
<comment type="catalytic activity">
    <reaction evidence="1">
        <text>tRNA(Asx) + L-aspartate + ATP = L-aspartyl-tRNA(Asx) + AMP + diphosphate</text>
        <dbReference type="Rhea" id="RHEA:18349"/>
        <dbReference type="Rhea" id="RHEA-COMP:9710"/>
        <dbReference type="Rhea" id="RHEA-COMP:9711"/>
        <dbReference type="ChEBI" id="CHEBI:29991"/>
        <dbReference type="ChEBI" id="CHEBI:30616"/>
        <dbReference type="ChEBI" id="CHEBI:33019"/>
        <dbReference type="ChEBI" id="CHEBI:78442"/>
        <dbReference type="ChEBI" id="CHEBI:78516"/>
        <dbReference type="ChEBI" id="CHEBI:456215"/>
        <dbReference type="EC" id="6.1.1.23"/>
    </reaction>
</comment>
<comment type="subunit">
    <text evidence="1">Homodimer.</text>
</comment>
<comment type="subcellular location">
    <subcellularLocation>
        <location evidence="1">Cytoplasm</location>
    </subcellularLocation>
</comment>
<comment type="similarity">
    <text evidence="1">Belongs to the class-II aminoacyl-tRNA synthetase family. Type 1 subfamily.</text>
</comment>
<accession>Q1QWG2</accession>
<evidence type="ECO:0000255" key="1">
    <source>
        <dbReference type="HAMAP-Rule" id="MF_00044"/>
    </source>
</evidence>
<name>SYDND_CHRSD</name>
<gene>
    <name evidence="1" type="primary">aspS</name>
    <name type="ordered locus">Csal_1844</name>
</gene>
<proteinExistence type="inferred from homology"/>
<feature type="chain" id="PRO_1000006659" description="Aspartate--tRNA(Asp/Asn) ligase">
    <location>
        <begin position="1"/>
        <end position="592"/>
    </location>
</feature>
<feature type="region of interest" description="Aspartate" evidence="1">
    <location>
        <begin position="197"/>
        <end position="200"/>
    </location>
</feature>
<feature type="binding site" evidence="1">
    <location>
        <position position="173"/>
    </location>
    <ligand>
        <name>L-aspartate</name>
        <dbReference type="ChEBI" id="CHEBI:29991"/>
    </ligand>
</feature>
<feature type="binding site" evidence="1">
    <location>
        <begin position="219"/>
        <end position="221"/>
    </location>
    <ligand>
        <name>ATP</name>
        <dbReference type="ChEBI" id="CHEBI:30616"/>
    </ligand>
</feature>
<feature type="binding site" evidence="1">
    <location>
        <position position="219"/>
    </location>
    <ligand>
        <name>L-aspartate</name>
        <dbReference type="ChEBI" id="CHEBI:29991"/>
    </ligand>
</feature>
<feature type="binding site" evidence="1">
    <location>
        <position position="228"/>
    </location>
    <ligand>
        <name>ATP</name>
        <dbReference type="ChEBI" id="CHEBI:30616"/>
    </ligand>
</feature>
<feature type="binding site" evidence="1">
    <location>
        <position position="448"/>
    </location>
    <ligand>
        <name>L-aspartate</name>
        <dbReference type="ChEBI" id="CHEBI:29991"/>
    </ligand>
</feature>
<feature type="binding site" evidence="1">
    <location>
        <position position="481"/>
    </location>
    <ligand>
        <name>ATP</name>
        <dbReference type="ChEBI" id="CHEBI:30616"/>
    </ligand>
</feature>
<feature type="binding site" evidence="1">
    <location>
        <position position="488"/>
    </location>
    <ligand>
        <name>L-aspartate</name>
        <dbReference type="ChEBI" id="CHEBI:29991"/>
    </ligand>
</feature>
<feature type="binding site" evidence="1">
    <location>
        <begin position="533"/>
        <end position="536"/>
    </location>
    <ligand>
        <name>ATP</name>
        <dbReference type="ChEBI" id="CHEBI:30616"/>
    </ligand>
</feature>
<feature type="site" description="Important for tRNA non-discrimination" evidence="1">
    <location>
        <position position="30"/>
    </location>
</feature>
<feature type="site" description="Important for tRNA non-discrimination" evidence="1">
    <location>
        <position position="81"/>
    </location>
</feature>